<dbReference type="EC" id="3.6.1.5"/>
<dbReference type="EMBL" id="U58597">
    <property type="protein sequence ID" value="AAB02720.1"/>
    <property type="molecule type" value="mRNA"/>
</dbReference>
<dbReference type="PIR" id="JC4616">
    <property type="entry name" value="JC4616"/>
</dbReference>
<dbReference type="SMR" id="P80595"/>
<dbReference type="STRING" id="4113.P80595"/>
<dbReference type="GlyCosmos" id="P80595">
    <property type="glycosylation" value="2 sites, No reported glycans"/>
</dbReference>
<dbReference type="InParanoid" id="P80595"/>
<dbReference type="BioCyc" id="MetaCyc:MONOMER-16862"/>
<dbReference type="BRENDA" id="3.6.1.5">
    <property type="organism ID" value="5757"/>
</dbReference>
<dbReference type="Proteomes" id="UP000011115">
    <property type="component" value="Unassembled WGS sequence"/>
</dbReference>
<dbReference type="ExpressionAtlas" id="P80595">
    <property type="expression patterns" value="baseline"/>
</dbReference>
<dbReference type="GO" id="GO:0016020">
    <property type="term" value="C:membrane"/>
    <property type="evidence" value="ECO:0000318"/>
    <property type="project" value="GO_Central"/>
</dbReference>
<dbReference type="GO" id="GO:0004050">
    <property type="term" value="F:apyrase activity"/>
    <property type="evidence" value="ECO:0007669"/>
    <property type="project" value="UniProtKB-EC"/>
</dbReference>
<dbReference type="GO" id="GO:0005524">
    <property type="term" value="F:ATP binding"/>
    <property type="evidence" value="ECO:0007669"/>
    <property type="project" value="UniProtKB-KW"/>
</dbReference>
<dbReference type="GO" id="GO:0017110">
    <property type="term" value="F:nucleoside diphosphate phosphatase activity"/>
    <property type="evidence" value="ECO:0000318"/>
    <property type="project" value="GO_Central"/>
</dbReference>
<dbReference type="GO" id="GO:0009134">
    <property type="term" value="P:nucleoside diphosphate catabolic process"/>
    <property type="evidence" value="ECO:0000318"/>
    <property type="project" value="GO_Central"/>
</dbReference>
<dbReference type="Gene3D" id="3.30.420.40">
    <property type="match status" value="1"/>
</dbReference>
<dbReference type="Gene3D" id="3.30.420.150">
    <property type="entry name" value="Exopolyphosphatase. Domain 2"/>
    <property type="match status" value="1"/>
</dbReference>
<dbReference type="InterPro" id="IPR000407">
    <property type="entry name" value="GDA1_CD39_NTPase"/>
</dbReference>
<dbReference type="PANTHER" id="PTHR11782">
    <property type="entry name" value="ADENOSINE/GUANOSINE DIPHOSPHATASE"/>
    <property type="match status" value="1"/>
</dbReference>
<dbReference type="PANTHER" id="PTHR11782:SF87">
    <property type="entry name" value="APYRASE"/>
    <property type="match status" value="1"/>
</dbReference>
<dbReference type="Pfam" id="PF01150">
    <property type="entry name" value="GDA1_CD39"/>
    <property type="match status" value="1"/>
</dbReference>
<dbReference type="PROSITE" id="PS01238">
    <property type="entry name" value="GDA1_CD39_NTPASE"/>
    <property type="match status" value="1"/>
</dbReference>
<comment type="function">
    <text>Catalyzes the hydrolysis of phosphoanhydride bonds of nucleoside tri- and di-phosphates.</text>
</comment>
<comment type="catalytic activity">
    <reaction>
        <text>a ribonucleoside 5'-triphosphate + 2 H2O = a ribonucleoside 5'-phosphate + 2 phosphate + 2 H(+)</text>
        <dbReference type="Rhea" id="RHEA:36795"/>
        <dbReference type="ChEBI" id="CHEBI:15377"/>
        <dbReference type="ChEBI" id="CHEBI:15378"/>
        <dbReference type="ChEBI" id="CHEBI:43474"/>
        <dbReference type="ChEBI" id="CHEBI:58043"/>
        <dbReference type="ChEBI" id="CHEBI:61557"/>
        <dbReference type="EC" id="3.6.1.5"/>
    </reaction>
</comment>
<comment type="cofactor">
    <cofactor>
        <name>Ca(2+)</name>
        <dbReference type="ChEBI" id="CHEBI:29108"/>
    </cofactor>
</comment>
<comment type="subcellular location">
    <subcellularLocation>
        <location evidence="3">Membrane</location>
        <topology evidence="3">Single-pass type II membrane protein</topology>
    </subcellularLocation>
</comment>
<comment type="PTM">
    <text>The N-terminus is blocked.</text>
</comment>
<comment type="similarity">
    <text evidence="3">Belongs to the GDA1/CD39 NTPase family.</text>
</comment>
<accession>P80595</accession>
<accession>Q43164</accession>
<gene>
    <name type="primary">RROP1</name>
</gene>
<keyword id="KW-0067">ATP-binding</keyword>
<keyword id="KW-0106">Calcium</keyword>
<keyword id="KW-0903">Direct protein sequencing</keyword>
<keyword id="KW-0325">Glycoprotein</keyword>
<keyword id="KW-0378">Hydrolase</keyword>
<keyword id="KW-0472">Membrane</keyword>
<keyword id="KW-0547">Nucleotide-binding</keyword>
<keyword id="KW-1185">Reference proteome</keyword>
<keyword id="KW-0735">Signal-anchor</keyword>
<keyword id="KW-0812">Transmembrane</keyword>
<keyword id="KW-1133">Transmembrane helix</keyword>
<protein>
    <recommendedName>
        <fullName>Apyrase</fullName>
        <ecNumber>3.6.1.5</ecNumber>
    </recommendedName>
    <alternativeName>
        <fullName>ATP-diphosphatase</fullName>
    </alternativeName>
    <alternativeName>
        <fullName>ATP-diphosphohydrolase</fullName>
    </alternativeName>
    <alternativeName>
        <fullName>Adenosine diphosphatase</fullName>
        <shortName>ADPase</shortName>
    </alternativeName>
</protein>
<feature type="chain" id="PRO_0000019904" description="Apyrase">
    <location>
        <begin position="1"/>
        <end position="454"/>
    </location>
</feature>
<feature type="topological domain" description="Cytoplasmic" evidence="2">
    <location>
        <begin position="1"/>
        <end position="7"/>
    </location>
</feature>
<feature type="transmembrane region" description="Helical; Signal-anchor for type II membrane protein" evidence="2">
    <location>
        <begin position="8"/>
        <end position="28"/>
    </location>
</feature>
<feature type="topological domain" description="Extracellular" evidence="2">
    <location>
        <begin position="29"/>
        <end position="454"/>
    </location>
</feature>
<feature type="active site" description="Proton acceptor" evidence="1">
    <location>
        <position position="170"/>
    </location>
</feature>
<feature type="binding site" evidence="3">
    <location>
        <begin position="48"/>
        <end position="58"/>
    </location>
    <ligand>
        <name>ATP</name>
        <dbReference type="ChEBI" id="CHEBI:30616"/>
    </ligand>
</feature>
<feature type="binding site" evidence="3">
    <location>
        <begin position="194"/>
        <end position="204"/>
    </location>
    <ligand>
        <name>ATP</name>
        <dbReference type="ChEBI" id="CHEBI:30616"/>
    </ligand>
</feature>
<feature type="glycosylation site" description="N-linked (GlcNAc...) asparagine" evidence="2">
    <location>
        <position position="151"/>
    </location>
</feature>
<feature type="glycosylation site" description="N-linked (GlcNAc...) asparagine" evidence="2">
    <location>
        <position position="262"/>
    </location>
</feature>
<sequence>MLNQNSHFIFIILAIFLVLPLSLLSKNVNAQIPLRRHLLSHESEHYAVIFDAGSTGSRVHVFRFDEKLGLLPIGNNIEYFMATEPGLSSYAEDPKAAANSLEPLLDGAEGVVPQELQSETPLELGATAGLRMLKGDAAEKILQAVRNLVKNQSTFHSKDQWVTILDGTQEGSYMWAAINYLLGNLGKDYKSTTATIDLGGGSVQMAYAISNEQFAKAPQNEDGEPYVQQKHLMSKDYNLYVHSYLNYGQLAGRAEIFKASRNESNPCALEGCDGYYSYGGVDYKVKAPKKGSSWKRCRRLTRHALKINAKCNIEECTFNGVWNGGGGDGQKNIHASSFFYDIGAQVGIVDTKFPSALAKPIQYLNAAKVACQTNVADIKSIFPKTQDRNIPYLCMDLIYEYTLLVDGFGLNPHKEITVIHDVQYKNYLVGAAWPLGCAIDLVSSTTNKIRVASS</sequence>
<reference key="1">
    <citation type="journal article" date="1996" name="Biochem. Biophys. Res. Commun.">
        <title>Purification and cloning of a soluble ATP-diphosphohydrolase (apyrase) from potato tubers (Solanum tuberosum).</title>
        <authorList>
            <person name="Handa M."/>
            <person name="Guidotti G."/>
        </authorList>
    </citation>
    <scope>NUCLEOTIDE SEQUENCE [MRNA]</scope>
    <scope>PROTEIN SEQUENCE OF 59-160; 236-253 AND 332-345</scope>
    <source>
        <tissue>Tuber</tissue>
    </source>
</reference>
<reference key="2">
    <citation type="journal article" date="1996" name="J. Biol. Chem.">
        <title>Partial purification and immunohistochemical localization of ATP diphosphohydrolase from Schistosoma mansoni. Immunological cross-reactivities with potato apyrase and Toxoplasma gondii nucleoside triphosphate hydrolase.</title>
        <authorList>
            <person name="Vasconcelos E.G."/>
            <person name="Ferreira S.T."/>
            <person name="de Carvalho T.M.U."/>
            <person name="de Souza W."/>
            <person name="Kettlun A.M."/>
            <person name="Mancilla M."/>
            <person name="Valenzuela M.A."/>
            <person name="Verjovski-Almeida S."/>
        </authorList>
    </citation>
    <scope>PROTEIN SEQUENCE OF 42-54; 68-95 AND 236-253</scope>
    <source>
        <strain>cv. Desiree</strain>
    </source>
</reference>
<organism>
    <name type="scientific">Solanum tuberosum</name>
    <name type="common">Potato</name>
    <dbReference type="NCBI Taxonomy" id="4113"/>
    <lineage>
        <taxon>Eukaryota</taxon>
        <taxon>Viridiplantae</taxon>
        <taxon>Streptophyta</taxon>
        <taxon>Embryophyta</taxon>
        <taxon>Tracheophyta</taxon>
        <taxon>Spermatophyta</taxon>
        <taxon>Magnoliopsida</taxon>
        <taxon>eudicotyledons</taxon>
        <taxon>Gunneridae</taxon>
        <taxon>Pentapetalae</taxon>
        <taxon>asterids</taxon>
        <taxon>lamiids</taxon>
        <taxon>Solanales</taxon>
        <taxon>Solanaceae</taxon>
        <taxon>Solanoideae</taxon>
        <taxon>Solaneae</taxon>
        <taxon>Solanum</taxon>
    </lineage>
</organism>
<name>APY_SOLTU</name>
<proteinExistence type="evidence at protein level"/>
<evidence type="ECO:0000250" key="1"/>
<evidence type="ECO:0000255" key="2"/>
<evidence type="ECO:0000305" key="3"/>